<gene>
    <name type="primary">SULTR2;1</name>
    <name type="ordered locus">At5g10180</name>
    <name type="ORF">T31P16_170</name>
</gene>
<name>SUT21_ARATH</name>
<reference key="1">
    <citation type="journal article" date="1997" name="Proc. Natl. Acad. Sci. U.S.A.">
        <title>Regulation of sulfur assimilation in higher plants: a sulfate transporter induced in sulfate-starved roots plays a central role in Arabidopsis thaliana.</title>
        <authorList>
            <person name="Takahashi H."/>
            <person name="Yamazaki M."/>
            <person name="Sasakura N."/>
            <person name="Watanabe A."/>
            <person name="Leustek T."/>
            <person name="de Almeida Engler J."/>
            <person name="Engler G."/>
            <person name="Van Montagu M."/>
            <person name="Saito K."/>
        </authorList>
    </citation>
    <scope>NUCLEOTIDE SEQUENCE [GENOMIC DNA / MRNA]</scope>
    <scope>TISSUE SPECIFICITY</scope>
    <scope>INDUCTION</scope>
    <source>
        <strain>cv. Columbia</strain>
    </source>
</reference>
<reference key="2">
    <citation type="journal article" date="2000" name="Nature">
        <title>Sequence and analysis of chromosome 5 of the plant Arabidopsis thaliana.</title>
        <authorList>
            <person name="Tabata S."/>
            <person name="Kaneko T."/>
            <person name="Nakamura Y."/>
            <person name="Kotani H."/>
            <person name="Kato T."/>
            <person name="Asamizu E."/>
            <person name="Miyajima N."/>
            <person name="Sasamoto S."/>
            <person name="Kimura T."/>
            <person name="Hosouchi T."/>
            <person name="Kawashima K."/>
            <person name="Kohara M."/>
            <person name="Matsumoto M."/>
            <person name="Matsuno A."/>
            <person name="Muraki A."/>
            <person name="Nakayama S."/>
            <person name="Nakazaki N."/>
            <person name="Naruo K."/>
            <person name="Okumura S."/>
            <person name="Shinpo S."/>
            <person name="Takeuchi C."/>
            <person name="Wada T."/>
            <person name="Watanabe A."/>
            <person name="Yamada M."/>
            <person name="Yasuda M."/>
            <person name="Sato S."/>
            <person name="de la Bastide M."/>
            <person name="Huang E."/>
            <person name="Spiegel L."/>
            <person name="Gnoj L."/>
            <person name="O'Shaughnessy A."/>
            <person name="Preston R."/>
            <person name="Habermann K."/>
            <person name="Murray J."/>
            <person name="Johnson D."/>
            <person name="Rohlfing T."/>
            <person name="Nelson J."/>
            <person name="Stoneking T."/>
            <person name="Pepin K."/>
            <person name="Spieth J."/>
            <person name="Sekhon M."/>
            <person name="Armstrong J."/>
            <person name="Becker M."/>
            <person name="Belter E."/>
            <person name="Cordum H."/>
            <person name="Cordes M."/>
            <person name="Courtney L."/>
            <person name="Courtney W."/>
            <person name="Dante M."/>
            <person name="Du H."/>
            <person name="Edwards J."/>
            <person name="Fryman J."/>
            <person name="Haakensen B."/>
            <person name="Lamar E."/>
            <person name="Latreille P."/>
            <person name="Leonard S."/>
            <person name="Meyer R."/>
            <person name="Mulvaney E."/>
            <person name="Ozersky P."/>
            <person name="Riley A."/>
            <person name="Strowmatt C."/>
            <person name="Wagner-McPherson C."/>
            <person name="Wollam A."/>
            <person name="Yoakum M."/>
            <person name="Bell M."/>
            <person name="Dedhia N."/>
            <person name="Parnell L."/>
            <person name="Shah R."/>
            <person name="Rodriguez M."/>
            <person name="Hoon See L."/>
            <person name="Vil D."/>
            <person name="Baker J."/>
            <person name="Kirchoff K."/>
            <person name="Toth K."/>
            <person name="King L."/>
            <person name="Bahret A."/>
            <person name="Miller B."/>
            <person name="Marra M.A."/>
            <person name="Martienssen R."/>
            <person name="McCombie W.R."/>
            <person name="Wilson R.K."/>
            <person name="Murphy G."/>
            <person name="Bancroft I."/>
            <person name="Volckaert G."/>
            <person name="Wambutt R."/>
            <person name="Duesterhoeft A."/>
            <person name="Stiekema W."/>
            <person name="Pohl T."/>
            <person name="Entian K.-D."/>
            <person name="Terryn N."/>
            <person name="Hartley N."/>
            <person name="Bent E."/>
            <person name="Johnson S."/>
            <person name="Langham S.-A."/>
            <person name="McCullagh B."/>
            <person name="Robben J."/>
            <person name="Grymonprez B."/>
            <person name="Zimmermann W."/>
            <person name="Ramsperger U."/>
            <person name="Wedler H."/>
            <person name="Balke K."/>
            <person name="Wedler E."/>
            <person name="Peters S."/>
            <person name="van Staveren M."/>
            <person name="Dirkse W."/>
            <person name="Mooijman P."/>
            <person name="Klein Lankhorst R."/>
            <person name="Weitzenegger T."/>
            <person name="Bothe G."/>
            <person name="Rose M."/>
            <person name="Hauf J."/>
            <person name="Berneiser S."/>
            <person name="Hempel S."/>
            <person name="Feldpausch M."/>
            <person name="Lamberth S."/>
            <person name="Villarroel R."/>
            <person name="Gielen J."/>
            <person name="Ardiles W."/>
            <person name="Bents O."/>
            <person name="Lemcke K."/>
            <person name="Kolesov G."/>
            <person name="Mayer K.F.X."/>
            <person name="Rudd S."/>
            <person name="Schoof H."/>
            <person name="Schueller C."/>
            <person name="Zaccaria P."/>
            <person name="Mewes H.-W."/>
            <person name="Bevan M."/>
            <person name="Fransz P.F."/>
        </authorList>
    </citation>
    <scope>NUCLEOTIDE SEQUENCE [LARGE SCALE GENOMIC DNA]</scope>
    <source>
        <strain>cv. Columbia</strain>
    </source>
</reference>
<reference key="3">
    <citation type="journal article" date="2017" name="Plant J.">
        <title>Araport11: a complete reannotation of the Arabidopsis thaliana reference genome.</title>
        <authorList>
            <person name="Cheng C.Y."/>
            <person name="Krishnakumar V."/>
            <person name="Chan A.P."/>
            <person name="Thibaud-Nissen F."/>
            <person name="Schobel S."/>
            <person name="Town C.D."/>
        </authorList>
    </citation>
    <scope>GENOME REANNOTATION</scope>
    <source>
        <strain>cv. Columbia</strain>
    </source>
</reference>
<reference key="4">
    <citation type="journal article" date="2003" name="Science">
        <title>Empirical analysis of transcriptional activity in the Arabidopsis genome.</title>
        <authorList>
            <person name="Yamada K."/>
            <person name="Lim J."/>
            <person name="Dale J.M."/>
            <person name="Chen H."/>
            <person name="Shinn P."/>
            <person name="Palm C.J."/>
            <person name="Southwick A.M."/>
            <person name="Wu H.C."/>
            <person name="Kim C.J."/>
            <person name="Nguyen M."/>
            <person name="Pham P.K."/>
            <person name="Cheuk R.F."/>
            <person name="Karlin-Newmann G."/>
            <person name="Liu S.X."/>
            <person name="Lam B."/>
            <person name="Sakano H."/>
            <person name="Wu T."/>
            <person name="Yu G."/>
            <person name="Miranda M."/>
            <person name="Quach H.L."/>
            <person name="Tripp M."/>
            <person name="Chang C.H."/>
            <person name="Lee J.M."/>
            <person name="Toriumi M.J."/>
            <person name="Chan M.M."/>
            <person name="Tang C.C."/>
            <person name="Onodera C.S."/>
            <person name="Deng J.M."/>
            <person name="Akiyama K."/>
            <person name="Ansari Y."/>
            <person name="Arakawa T."/>
            <person name="Banh J."/>
            <person name="Banno F."/>
            <person name="Bowser L."/>
            <person name="Brooks S.Y."/>
            <person name="Carninci P."/>
            <person name="Chao Q."/>
            <person name="Choy N."/>
            <person name="Enju A."/>
            <person name="Goldsmith A.D."/>
            <person name="Gurjal M."/>
            <person name="Hansen N.F."/>
            <person name="Hayashizaki Y."/>
            <person name="Johnson-Hopson C."/>
            <person name="Hsuan V.W."/>
            <person name="Iida K."/>
            <person name="Karnes M."/>
            <person name="Khan S."/>
            <person name="Koesema E."/>
            <person name="Ishida J."/>
            <person name="Jiang P.X."/>
            <person name="Jones T."/>
            <person name="Kawai J."/>
            <person name="Kamiya A."/>
            <person name="Meyers C."/>
            <person name="Nakajima M."/>
            <person name="Narusaka M."/>
            <person name="Seki M."/>
            <person name="Sakurai T."/>
            <person name="Satou M."/>
            <person name="Tamse R."/>
            <person name="Vaysberg M."/>
            <person name="Wallender E.K."/>
            <person name="Wong C."/>
            <person name="Yamamura Y."/>
            <person name="Yuan S."/>
            <person name="Shinozaki K."/>
            <person name="Davis R.W."/>
            <person name="Theologis A."/>
            <person name="Ecker J.R."/>
        </authorList>
    </citation>
    <scope>NUCLEOTIDE SEQUENCE [LARGE SCALE MRNA]</scope>
    <source>
        <strain>cv. Columbia</strain>
    </source>
</reference>
<reference key="5">
    <citation type="journal article" date="2000" name="Plant J.">
        <title>The roles of three functional sulphate transporters involved in uptake and translocation of sulphate in Arabidopsis thaliana.</title>
        <authorList>
            <person name="Takahashi H."/>
            <person name="Watanabe-Takahashi A."/>
            <person name="Smith F.W."/>
            <person name="Blake-Kalff M."/>
            <person name="Hawkesford M.J."/>
            <person name="Saito K."/>
        </authorList>
    </citation>
    <scope>FUNCTION</scope>
    <scope>TISSUE SPECIFICITY</scope>
    <scope>INDUCTION</scope>
</reference>
<keyword id="KW-0325">Glycoprotein</keyword>
<keyword id="KW-0472">Membrane</keyword>
<keyword id="KW-1185">Reference proteome</keyword>
<keyword id="KW-0764">Sulfate transport</keyword>
<keyword id="KW-0769">Symport</keyword>
<keyword id="KW-0812">Transmembrane</keyword>
<keyword id="KW-1133">Transmembrane helix</keyword>
<keyword id="KW-0813">Transport</keyword>
<evidence type="ECO:0000255" key="1"/>
<evidence type="ECO:0000255" key="2">
    <source>
        <dbReference type="PROSITE-ProRule" id="PRU00198"/>
    </source>
</evidence>
<evidence type="ECO:0000256" key="3">
    <source>
        <dbReference type="SAM" id="MobiDB-lite"/>
    </source>
</evidence>
<evidence type="ECO:0000269" key="4">
    <source>
    </source>
</evidence>
<evidence type="ECO:0000269" key="5">
    <source>
    </source>
</evidence>
<evidence type="ECO:0000305" key="6"/>
<proteinExistence type="evidence at transcript level"/>
<feature type="chain" id="PRO_0000080175" description="Sulfate transporter 2.1">
    <location>
        <begin position="1"/>
        <end position="677"/>
    </location>
</feature>
<feature type="topological domain" description="Cytoplasmic" evidence="1">
    <location>
        <begin position="1"/>
        <end position="118"/>
    </location>
</feature>
<feature type="transmembrane region" description="Helical" evidence="1">
    <location>
        <begin position="119"/>
        <end position="139"/>
    </location>
</feature>
<feature type="topological domain" description="Extracellular" evidence="1">
    <location>
        <begin position="140"/>
        <end position="141"/>
    </location>
</feature>
<feature type="transmembrane region" description="Helical" evidence="1">
    <location>
        <begin position="142"/>
        <end position="162"/>
    </location>
</feature>
<feature type="topological domain" description="Cytoplasmic" evidence="1">
    <location>
        <begin position="163"/>
        <end position="166"/>
    </location>
</feature>
<feature type="transmembrane region" description="Helical" evidence="1">
    <location>
        <begin position="167"/>
        <end position="187"/>
    </location>
</feature>
<feature type="topological domain" description="Extracellular" evidence="1">
    <location>
        <begin position="188"/>
        <end position="198"/>
    </location>
</feature>
<feature type="transmembrane region" description="Helical" evidence="1">
    <location>
        <begin position="199"/>
        <end position="219"/>
    </location>
</feature>
<feature type="topological domain" description="Cytoplasmic" evidence="1">
    <location>
        <begin position="220"/>
        <end position="221"/>
    </location>
</feature>
<feature type="transmembrane region" description="Helical" evidence="1">
    <location>
        <begin position="222"/>
        <end position="242"/>
    </location>
</feature>
<feature type="topological domain" description="Extracellular" evidence="1">
    <location>
        <begin position="243"/>
        <end position="278"/>
    </location>
</feature>
<feature type="transmembrane region" description="Helical" evidence="1">
    <location>
        <begin position="279"/>
        <end position="299"/>
    </location>
</feature>
<feature type="topological domain" description="Cytoplasmic" evidence="1">
    <location>
        <begin position="300"/>
        <end position="304"/>
    </location>
</feature>
<feature type="transmembrane region" description="Helical" evidence="1">
    <location>
        <begin position="305"/>
        <end position="325"/>
    </location>
</feature>
<feature type="topological domain" description="Extracellular" evidence="1">
    <location>
        <begin position="326"/>
        <end position="360"/>
    </location>
</feature>
<feature type="transmembrane region" description="Helical" evidence="1">
    <location>
        <begin position="361"/>
        <end position="381"/>
    </location>
</feature>
<feature type="topological domain" description="Cytoplasmic" evidence="1">
    <location>
        <begin position="382"/>
        <end position="397"/>
    </location>
</feature>
<feature type="transmembrane region" description="Helical" evidence="1">
    <location>
        <begin position="398"/>
        <end position="418"/>
    </location>
</feature>
<feature type="topological domain" description="Extracellular" evidence="1">
    <location>
        <begin position="419"/>
        <end position="426"/>
    </location>
</feature>
<feature type="transmembrane region" description="Helical" evidence="1">
    <location>
        <begin position="427"/>
        <end position="447"/>
    </location>
</feature>
<feature type="topological domain" description="Cytoplasmic" evidence="1">
    <location>
        <begin position="448"/>
        <end position="454"/>
    </location>
</feature>
<feature type="transmembrane region" description="Helical" evidence="1">
    <location>
        <begin position="455"/>
        <end position="475"/>
    </location>
</feature>
<feature type="topological domain" description="Extracellular" evidence="1">
    <location>
        <begin position="476"/>
        <end position="490"/>
    </location>
</feature>
<feature type="transmembrane region" description="Helical" evidence="1">
    <location>
        <begin position="491"/>
        <end position="511"/>
    </location>
</feature>
<feature type="topological domain" description="Cytoplasmic" evidence="1">
    <location>
        <begin position="512"/>
        <end position="677"/>
    </location>
</feature>
<feature type="domain" description="STAS" evidence="2">
    <location>
        <begin position="548"/>
        <end position="672"/>
    </location>
</feature>
<feature type="region of interest" description="Disordered" evidence="3">
    <location>
        <begin position="23"/>
        <end position="54"/>
    </location>
</feature>
<feature type="compositionally biased region" description="Low complexity" evidence="3">
    <location>
        <begin position="28"/>
        <end position="44"/>
    </location>
</feature>
<feature type="glycosylation site" description="N-linked (GlcNAc...) asparagine" evidence="1">
    <location>
        <position position="255"/>
    </location>
</feature>
<organism>
    <name type="scientific">Arabidopsis thaliana</name>
    <name type="common">Mouse-ear cress</name>
    <dbReference type="NCBI Taxonomy" id="3702"/>
    <lineage>
        <taxon>Eukaryota</taxon>
        <taxon>Viridiplantae</taxon>
        <taxon>Streptophyta</taxon>
        <taxon>Embryophyta</taxon>
        <taxon>Tracheophyta</taxon>
        <taxon>Spermatophyta</taxon>
        <taxon>Magnoliopsida</taxon>
        <taxon>eudicotyledons</taxon>
        <taxon>Gunneridae</taxon>
        <taxon>Pentapetalae</taxon>
        <taxon>rosids</taxon>
        <taxon>malvids</taxon>
        <taxon>Brassicales</taxon>
        <taxon>Brassicaceae</taxon>
        <taxon>Camelineae</taxon>
        <taxon>Arabidopsis</taxon>
    </lineage>
</organism>
<protein>
    <recommendedName>
        <fullName>Sulfate transporter 2.1</fullName>
    </recommendedName>
    <alternativeName>
        <fullName>AST68</fullName>
    </alternativeName>
</protein>
<accession>O04722</accession>
<sequence>MKERDSESFESLSHQVLPNTSNSTHMIQMAMANSGSSAAAQAGQDQPDRSKWLLDCPEPPSPWHELKRQVKGSFLTKAKKFKSLQKQPFPKQILSVLQAIFPIFGWCRNYKLTMFKNDLMAGLTLASLCIPQSIGYATLAKLDPQYGLYTSVVPPLIYALMGTSREIAIGPVAVVSLLISSMLQKLIDPETDPLGYKKLVLTTTFFAGIFQASFGLFRLGFLVDFLSHAAIVGFMGGAAIVIGLQQLKGLLGITNFTTNTDIVSVLRAVWRSCQQQWSPHTFILGCSFLSFILITRFIGKKYKKLFWLPAIAPLIAVVVSTLMVFLTKADEHGVKTVRHIKGGLNPMSIQDLDFNTPHLGQIAKIGLIIAIVALTEAIAVGRSFAGIKGYRLDGNKEMVAIGFMNVLGSFTSCYAATGSFSRTAVNFAAGCETAMSNIVMAVTVFVALECLTRLLYYTPIAILASIILSALPGLININEAIHIWKVDKFDFLALIGAFFGVLFASVEIGLLVAVVISFAKIILISIRPGIETLGRMPGTDTFTDTNQYPMTVKTPGVLIFRVKSALLCFANASSIEERIMGWVDEEEEEENTKSNAKRKILFVVLDMSSLINVDTSGITALLELHNKLIKTGVELVIVNPKWQVIHKLNQAKFVDRIGGKVYLTIGEALDACFGLKV</sequence>
<comment type="function">
    <text evidence="4">Low-affinity H(+)/sulfate cotransporter that may be involved in root-to-shoot translocation of sulfate. Plays a central role in the regulation of sulfate assimilation.</text>
</comment>
<comment type="subcellular location">
    <subcellularLocation>
        <location evidence="6">Membrane</location>
        <topology evidence="6">Multi-pass membrane protein</topology>
    </subcellularLocation>
</comment>
<comment type="tissue specificity">
    <text evidence="4 5">Expressed in root cap, central cylinder of roots and in vascular tissues of leaves.</text>
</comment>
<comment type="induction">
    <text evidence="4 5">In roots by sulfate starvation or after selenate treatment.</text>
</comment>
<comment type="similarity">
    <text evidence="6">Belongs to the SLC26A/SulP transporter (TC 2.A.53) family.</text>
</comment>
<dbReference type="EMBL" id="AB003590">
    <property type="protein sequence ID" value="BAA20084.1"/>
    <property type="molecule type" value="Genomic_DNA"/>
</dbReference>
<dbReference type="EMBL" id="AB003591">
    <property type="protein sequence ID" value="BAA20085.1"/>
    <property type="molecule type" value="mRNA"/>
</dbReference>
<dbReference type="EMBL" id="AL356332">
    <property type="protein sequence ID" value="CAB92059.1"/>
    <property type="molecule type" value="Genomic_DNA"/>
</dbReference>
<dbReference type="EMBL" id="CP002688">
    <property type="protein sequence ID" value="AED91505.1"/>
    <property type="molecule type" value="Genomic_DNA"/>
</dbReference>
<dbReference type="EMBL" id="AY062546">
    <property type="protein sequence ID" value="AAL32624.1"/>
    <property type="molecule type" value="mRNA"/>
</dbReference>
<dbReference type="EMBL" id="AY093335">
    <property type="protein sequence ID" value="AAM13334.1"/>
    <property type="molecule type" value="mRNA"/>
</dbReference>
<dbReference type="PIR" id="T50022">
    <property type="entry name" value="T50022"/>
</dbReference>
<dbReference type="RefSeq" id="NP_196580.1">
    <property type="nucleotide sequence ID" value="NM_121056.3"/>
</dbReference>
<dbReference type="SMR" id="O04722"/>
<dbReference type="BioGRID" id="16160">
    <property type="interactions" value="2"/>
</dbReference>
<dbReference type="FunCoup" id="O04722">
    <property type="interactions" value="390"/>
</dbReference>
<dbReference type="IntAct" id="O04722">
    <property type="interactions" value="1"/>
</dbReference>
<dbReference type="STRING" id="3702.O04722"/>
<dbReference type="GlyCosmos" id="O04722">
    <property type="glycosylation" value="1 site, No reported glycans"/>
</dbReference>
<dbReference type="GlyGen" id="O04722">
    <property type="glycosylation" value="1 site"/>
</dbReference>
<dbReference type="PaxDb" id="3702-AT5G10180.1"/>
<dbReference type="ProteomicsDB" id="226829"/>
<dbReference type="EnsemblPlants" id="AT5G10180.1">
    <property type="protein sequence ID" value="AT5G10180.1"/>
    <property type="gene ID" value="AT5G10180"/>
</dbReference>
<dbReference type="GeneID" id="830882"/>
<dbReference type="Gramene" id="AT5G10180.1">
    <property type="protein sequence ID" value="AT5G10180.1"/>
    <property type="gene ID" value="AT5G10180"/>
</dbReference>
<dbReference type="KEGG" id="ath:AT5G10180"/>
<dbReference type="Araport" id="AT5G10180"/>
<dbReference type="TAIR" id="AT5G10180">
    <property type="gene designation" value="SULTR2"/>
</dbReference>
<dbReference type="eggNOG" id="KOG0236">
    <property type="taxonomic scope" value="Eukaryota"/>
</dbReference>
<dbReference type="HOGENOM" id="CLU_003182_13_2_1"/>
<dbReference type="InParanoid" id="O04722"/>
<dbReference type="OMA" id="VWRSCQQ"/>
<dbReference type="PhylomeDB" id="O04722"/>
<dbReference type="PRO" id="PR:O04722"/>
<dbReference type="Proteomes" id="UP000006548">
    <property type="component" value="Chromosome 5"/>
</dbReference>
<dbReference type="ExpressionAtlas" id="O04722">
    <property type="expression patterns" value="baseline and differential"/>
</dbReference>
<dbReference type="GO" id="GO:0016020">
    <property type="term" value="C:membrane"/>
    <property type="evidence" value="ECO:0007669"/>
    <property type="project" value="UniProtKB-SubCell"/>
</dbReference>
<dbReference type="GO" id="GO:0008271">
    <property type="term" value="F:secondary active sulfate transmembrane transporter activity"/>
    <property type="evidence" value="ECO:0007669"/>
    <property type="project" value="InterPro"/>
</dbReference>
<dbReference type="GO" id="GO:0015116">
    <property type="term" value="F:sulfate transmembrane transporter activity"/>
    <property type="evidence" value="ECO:0000316"/>
    <property type="project" value="TAIR"/>
</dbReference>
<dbReference type="GO" id="GO:0015293">
    <property type="term" value="F:symporter activity"/>
    <property type="evidence" value="ECO:0007669"/>
    <property type="project" value="UniProtKB-KW"/>
</dbReference>
<dbReference type="GO" id="GO:1902358">
    <property type="term" value="P:sulfate transmembrane transport"/>
    <property type="evidence" value="ECO:0000316"/>
    <property type="project" value="TAIR"/>
</dbReference>
<dbReference type="CDD" id="cd07042">
    <property type="entry name" value="STAS_SulP_like_sulfate_transporter"/>
    <property type="match status" value="1"/>
</dbReference>
<dbReference type="FunFam" id="3.30.750.24:FF:000002">
    <property type="entry name" value="Sulfate transporter 31"/>
    <property type="match status" value="1"/>
</dbReference>
<dbReference type="Gene3D" id="3.30.750.24">
    <property type="entry name" value="STAS domain"/>
    <property type="match status" value="1"/>
</dbReference>
<dbReference type="InterPro" id="IPR018045">
    <property type="entry name" value="S04_transporter_CS"/>
</dbReference>
<dbReference type="InterPro" id="IPR011547">
    <property type="entry name" value="SLC26A/SulP_dom"/>
</dbReference>
<dbReference type="InterPro" id="IPR001902">
    <property type="entry name" value="SLC26A/SulP_fam"/>
</dbReference>
<dbReference type="InterPro" id="IPR002645">
    <property type="entry name" value="STAS_dom"/>
</dbReference>
<dbReference type="InterPro" id="IPR036513">
    <property type="entry name" value="STAS_dom_sf"/>
</dbReference>
<dbReference type="NCBIfam" id="TIGR00815">
    <property type="entry name" value="sulP"/>
    <property type="match status" value="1"/>
</dbReference>
<dbReference type="PANTHER" id="PTHR11814">
    <property type="entry name" value="SULFATE TRANSPORTER"/>
    <property type="match status" value="1"/>
</dbReference>
<dbReference type="Pfam" id="PF01740">
    <property type="entry name" value="STAS"/>
    <property type="match status" value="1"/>
</dbReference>
<dbReference type="Pfam" id="PF00916">
    <property type="entry name" value="Sulfate_transp"/>
    <property type="match status" value="1"/>
</dbReference>
<dbReference type="SUPFAM" id="SSF52091">
    <property type="entry name" value="SpoIIaa-like"/>
    <property type="match status" value="1"/>
</dbReference>
<dbReference type="PROSITE" id="PS01130">
    <property type="entry name" value="SLC26A"/>
    <property type="match status" value="1"/>
</dbReference>
<dbReference type="PROSITE" id="PS50801">
    <property type="entry name" value="STAS"/>
    <property type="match status" value="1"/>
</dbReference>